<evidence type="ECO:0000255" key="1">
    <source>
        <dbReference type="HAMAP-Rule" id="MF_00251"/>
    </source>
</evidence>
<evidence type="ECO:0000305" key="2"/>
<protein>
    <recommendedName>
        <fullName evidence="1">Large ribosomal subunit protein bL36</fullName>
    </recommendedName>
    <alternativeName>
        <fullName evidence="2">50S ribosomal protein L36</fullName>
    </alternativeName>
</protein>
<name>RL36_CLOB8</name>
<comment type="similarity">
    <text evidence="1">Belongs to the bacterial ribosomal protein bL36 family.</text>
</comment>
<organism>
    <name type="scientific">Clostridium beijerinckii (strain ATCC 51743 / NCIMB 8052)</name>
    <name type="common">Clostridium acetobutylicum</name>
    <dbReference type="NCBI Taxonomy" id="290402"/>
    <lineage>
        <taxon>Bacteria</taxon>
        <taxon>Bacillati</taxon>
        <taxon>Bacillota</taxon>
        <taxon>Clostridia</taxon>
        <taxon>Eubacteriales</taxon>
        <taxon>Clostridiaceae</taxon>
        <taxon>Clostridium</taxon>
    </lineage>
</organism>
<reference key="1">
    <citation type="submission" date="2007-06" db="EMBL/GenBank/DDBJ databases">
        <title>Complete sequence of Clostridium beijerinckii NCIMB 8052.</title>
        <authorList>
            <consortium name="US DOE Joint Genome Institute"/>
            <person name="Copeland A."/>
            <person name="Lucas S."/>
            <person name="Lapidus A."/>
            <person name="Barry K."/>
            <person name="Detter J.C."/>
            <person name="Glavina del Rio T."/>
            <person name="Hammon N."/>
            <person name="Israni S."/>
            <person name="Dalin E."/>
            <person name="Tice H."/>
            <person name="Pitluck S."/>
            <person name="Sims D."/>
            <person name="Brettin T."/>
            <person name="Bruce D."/>
            <person name="Tapia R."/>
            <person name="Brainard J."/>
            <person name="Schmutz J."/>
            <person name="Larimer F."/>
            <person name="Land M."/>
            <person name="Hauser L."/>
            <person name="Kyrpides N."/>
            <person name="Mikhailova N."/>
            <person name="Bennet G."/>
            <person name="Cann I."/>
            <person name="Chen J.-S."/>
            <person name="Contreras A.L."/>
            <person name="Jones D."/>
            <person name="Kashket E."/>
            <person name="Mitchell W."/>
            <person name="Stoddard S."/>
            <person name="Schwarz W."/>
            <person name="Qureshi N."/>
            <person name="Young M."/>
            <person name="Shi Z."/>
            <person name="Ezeji T."/>
            <person name="White B."/>
            <person name="Blaschek H."/>
            <person name="Richardson P."/>
        </authorList>
    </citation>
    <scope>NUCLEOTIDE SEQUENCE [LARGE SCALE GENOMIC DNA]</scope>
    <source>
        <strain>ATCC 51743 / NCIMB 8052</strain>
    </source>
</reference>
<feature type="chain" id="PRO_1000078467" description="Large ribosomal subunit protein bL36">
    <location>
        <begin position="1"/>
        <end position="37"/>
    </location>
</feature>
<accession>A6LPT6</accession>
<keyword id="KW-0687">Ribonucleoprotein</keyword>
<keyword id="KW-0689">Ribosomal protein</keyword>
<dbReference type="EMBL" id="CP000721">
    <property type="protein sequence ID" value="ABR32366.1"/>
    <property type="molecule type" value="Genomic_DNA"/>
</dbReference>
<dbReference type="RefSeq" id="WP_003156543.1">
    <property type="nucleotide sequence ID" value="NC_009617.1"/>
</dbReference>
<dbReference type="SMR" id="A6LPT6"/>
<dbReference type="GeneID" id="97412846"/>
<dbReference type="KEGG" id="cbe:Cbei_0176"/>
<dbReference type="eggNOG" id="COG0257">
    <property type="taxonomic scope" value="Bacteria"/>
</dbReference>
<dbReference type="HOGENOM" id="CLU_135723_6_2_9"/>
<dbReference type="Proteomes" id="UP000000565">
    <property type="component" value="Chromosome"/>
</dbReference>
<dbReference type="GO" id="GO:0005737">
    <property type="term" value="C:cytoplasm"/>
    <property type="evidence" value="ECO:0007669"/>
    <property type="project" value="UniProtKB-ARBA"/>
</dbReference>
<dbReference type="GO" id="GO:1990904">
    <property type="term" value="C:ribonucleoprotein complex"/>
    <property type="evidence" value="ECO:0007669"/>
    <property type="project" value="UniProtKB-KW"/>
</dbReference>
<dbReference type="GO" id="GO:0005840">
    <property type="term" value="C:ribosome"/>
    <property type="evidence" value="ECO:0007669"/>
    <property type="project" value="UniProtKB-KW"/>
</dbReference>
<dbReference type="GO" id="GO:0003735">
    <property type="term" value="F:structural constituent of ribosome"/>
    <property type="evidence" value="ECO:0007669"/>
    <property type="project" value="InterPro"/>
</dbReference>
<dbReference type="GO" id="GO:0006412">
    <property type="term" value="P:translation"/>
    <property type="evidence" value="ECO:0007669"/>
    <property type="project" value="UniProtKB-UniRule"/>
</dbReference>
<dbReference type="HAMAP" id="MF_00251">
    <property type="entry name" value="Ribosomal_bL36"/>
    <property type="match status" value="1"/>
</dbReference>
<dbReference type="InterPro" id="IPR000473">
    <property type="entry name" value="Ribosomal_bL36"/>
</dbReference>
<dbReference type="InterPro" id="IPR035977">
    <property type="entry name" value="Ribosomal_bL36_sp"/>
</dbReference>
<dbReference type="NCBIfam" id="TIGR01022">
    <property type="entry name" value="rpmJ_bact"/>
    <property type="match status" value="1"/>
</dbReference>
<dbReference type="PANTHER" id="PTHR42888">
    <property type="entry name" value="50S RIBOSOMAL PROTEIN L36, CHLOROPLASTIC"/>
    <property type="match status" value="1"/>
</dbReference>
<dbReference type="PANTHER" id="PTHR42888:SF1">
    <property type="entry name" value="LARGE RIBOSOMAL SUBUNIT PROTEIN BL36C"/>
    <property type="match status" value="1"/>
</dbReference>
<dbReference type="Pfam" id="PF00444">
    <property type="entry name" value="Ribosomal_L36"/>
    <property type="match status" value="1"/>
</dbReference>
<dbReference type="SUPFAM" id="SSF57840">
    <property type="entry name" value="Ribosomal protein L36"/>
    <property type="match status" value="1"/>
</dbReference>
<dbReference type="PROSITE" id="PS00828">
    <property type="entry name" value="RIBOSOMAL_L36"/>
    <property type="match status" value="1"/>
</dbReference>
<gene>
    <name evidence="1" type="primary">rpmJ</name>
    <name type="ordered locus">Cbei_0176</name>
</gene>
<sequence length="37" mass="4305">MKVRPSVKPICEKCKVIRRKGKVMVICENPKHKQKQG</sequence>
<proteinExistence type="inferred from homology"/>